<evidence type="ECO:0000250" key="1"/>
<evidence type="ECO:0000250" key="2">
    <source>
        <dbReference type="UniProtKB" id="Q9TWG0"/>
    </source>
</evidence>
<evidence type="ECO:0000255" key="3">
    <source>
        <dbReference type="PROSITE-ProRule" id="PRU00031"/>
    </source>
</evidence>
<evidence type="ECO:0000303" key="4">
    <source>
    </source>
</evidence>
<evidence type="ECO:0000303" key="5">
    <source>
    </source>
</evidence>
<evidence type="ECO:0000305" key="6"/>
<feature type="signal peptide" evidence="2">
    <location>
        <begin position="1"/>
        <end position="16"/>
    </location>
</feature>
<feature type="chain" id="PRO_0000433751" description="U-actitoxin-Avd3f">
    <location>
        <begin position="17"/>
        <end position="74"/>
    </location>
</feature>
<feature type="propeptide" id="PRO_0000433752" evidence="2">
    <location>
        <begin position="75"/>
        <end position="82"/>
    </location>
</feature>
<feature type="domain" description="BPTI/Kunitz inhibitor" evidence="3">
    <location>
        <begin position="21"/>
        <end position="71"/>
    </location>
</feature>
<feature type="site" description="Reactive bond for trypsin" evidence="1">
    <location>
        <begin position="31"/>
        <end position="32"/>
    </location>
</feature>
<feature type="disulfide bond" evidence="3">
    <location>
        <begin position="21"/>
        <end position="71"/>
    </location>
</feature>
<feature type="disulfide bond" evidence="3">
    <location>
        <begin position="30"/>
        <end position="54"/>
    </location>
</feature>
<feature type="disulfide bond" evidence="3">
    <location>
        <begin position="46"/>
        <end position="67"/>
    </location>
</feature>
<feature type="sequence conflict" description="In Ref. 1; FK756031." evidence="6" ref="1">
    <original>V</original>
    <variation>L</variation>
    <location>
        <position position="2"/>
    </location>
</feature>
<name>VKT1A_ANEVI</name>
<keyword id="KW-1015">Disulfide bond</keyword>
<keyword id="KW-0872">Ion channel impairing toxin</keyword>
<keyword id="KW-0166">Nematocyst</keyword>
<keyword id="KW-0632">Potassium channel impairing toxin</keyword>
<keyword id="KW-0646">Protease inhibitor</keyword>
<keyword id="KW-0964">Secreted</keyword>
<keyword id="KW-0722">Serine protease inhibitor</keyword>
<keyword id="KW-0732">Signal</keyword>
<keyword id="KW-0800">Toxin</keyword>
<keyword id="KW-1220">Voltage-gated potassium channel impairing toxin</keyword>
<organism>
    <name type="scientific">Anemonia viridis</name>
    <name type="common">Snakelocks anemone</name>
    <dbReference type="NCBI Taxonomy" id="51769"/>
    <lineage>
        <taxon>Eukaryota</taxon>
        <taxon>Metazoa</taxon>
        <taxon>Cnidaria</taxon>
        <taxon>Anthozoa</taxon>
        <taxon>Hexacorallia</taxon>
        <taxon>Actiniaria</taxon>
        <taxon>Actiniidae</taxon>
        <taxon>Anemonia</taxon>
    </lineage>
</organism>
<proteinExistence type="inferred from homology"/>
<reference key="1">
    <citation type="journal article" date="2009" name="BMC Genomics">
        <title>Comprehensive EST analysis of the symbiotic sea anemone, Anemonia viridis.</title>
        <authorList>
            <person name="Sabourault C."/>
            <person name="Ganot P."/>
            <person name="Deleury E."/>
            <person name="Allemand D."/>
            <person name="Furla P."/>
        </authorList>
    </citation>
    <scope>NUCLEOTIDE SEQUENCE [MRNA]</scope>
</reference>
<reference key="2">
    <citation type="journal article" date="2011" name="BMC Genomics">
        <title>The mining of toxin-like polypeptides from EST database by single residue distribution analysis.</title>
        <authorList>
            <person name="Kozlov S."/>
            <person name="Grishin E."/>
        </authorList>
    </citation>
    <scope>NOMENCLATURE</scope>
</reference>
<reference key="3">
    <citation type="journal article" date="2012" name="Toxicon">
        <title>Development of a rational nomenclature for naming peptide and protein toxins from sea anemones.</title>
        <authorList>
            <person name="Oliveira J.S."/>
            <person name="Fuentes-Silva D."/>
            <person name="King G.F."/>
        </authorList>
    </citation>
    <scope>NOMENCLATURE</scope>
</reference>
<protein>
    <recommendedName>
        <fullName evidence="5">U-actitoxin-Avd3f</fullName>
        <shortName evidence="5">U-AITX-Avd3f</shortName>
    </recommendedName>
    <alternativeName>
        <fullName evidence="4">AsKC1a</fullName>
    </alternativeName>
</protein>
<accession>P0DN06</accession>
<comment type="function">
    <text evidence="2">Dual-function toxin that inhibits both the serine protease trypsin (Kd=30 nM) and voltage-gated potassium channels Kv1.2/KCNA2 (IC(50)=2800 nM).</text>
</comment>
<comment type="subcellular location">
    <subcellularLocation>
        <location evidence="6">Secreted</location>
    </subcellularLocation>
    <subcellularLocation>
        <location evidence="6">Nematocyst</location>
    </subcellularLocation>
</comment>
<comment type="miscellaneous">
    <text>The primary structure of the mature peptide is identical to that of kappaPI-actitoxin-Avd3b (AsKC1) from Anemonia sulcata (AC Q9TWG0).</text>
</comment>
<comment type="similarity">
    <text evidence="6">Belongs to the venom Kunitz-type family. Sea anemone type 2 potassium channel toxin subfamily.</text>
</comment>
<comment type="caution">
    <text evidence="6">Opinions are divided on whether Anemonia viridis (Forsskal, 1775) and Anemonia sulcata (Pennant, 1777) are separate species.</text>
</comment>
<sequence>MVFLLCFFLVADVSYGINKDCLLPMDVGRCRASHPRYYYNSSSKRCEKFIYGGCRGNANNFHTLEECEKVCGVRSRDSPKEN</sequence>
<dbReference type="EMBL" id="FK756625">
    <property type="status" value="NOT_ANNOTATED_CDS"/>
    <property type="molecule type" value="mRNA"/>
</dbReference>
<dbReference type="EMBL" id="FK756031">
    <property type="status" value="NOT_ANNOTATED_CDS"/>
    <property type="molecule type" value="mRNA"/>
</dbReference>
<dbReference type="EMBL" id="FK727341">
    <property type="status" value="NOT_ANNOTATED_CDS"/>
    <property type="molecule type" value="mRNA"/>
</dbReference>
<dbReference type="SMR" id="P0DN06"/>
<dbReference type="GO" id="GO:0005615">
    <property type="term" value="C:extracellular space"/>
    <property type="evidence" value="ECO:0007669"/>
    <property type="project" value="TreeGrafter"/>
</dbReference>
<dbReference type="GO" id="GO:0042151">
    <property type="term" value="C:nematocyst"/>
    <property type="evidence" value="ECO:0007669"/>
    <property type="project" value="UniProtKB-SubCell"/>
</dbReference>
<dbReference type="GO" id="GO:0015459">
    <property type="term" value="F:potassium channel regulator activity"/>
    <property type="evidence" value="ECO:0007669"/>
    <property type="project" value="UniProtKB-KW"/>
</dbReference>
<dbReference type="GO" id="GO:0004867">
    <property type="term" value="F:serine-type endopeptidase inhibitor activity"/>
    <property type="evidence" value="ECO:0007669"/>
    <property type="project" value="UniProtKB-KW"/>
</dbReference>
<dbReference type="GO" id="GO:0090729">
    <property type="term" value="F:toxin activity"/>
    <property type="evidence" value="ECO:0007669"/>
    <property type="project" value="UniProtKB-KW"/>
</dbReference>
<dbReference type="CDD" id="cd22633">
    <property type="entry name" value="Kunitz_actitoxin-like"/>
    <property type="match status" value="1"/>
</dbReference>
<dbReference type="FunFam" id="4.10.410.10:FF:000021">
    <property type="entry name" value="Serine protease inhibitor, putative"/>
    <property type="match status" value="1"/>
</dbReference>
<dbReference type="Gene3D" id="4.10.410.10">
    <property type="entry name" value="Pancreatic trypsin inhibitor Kunitz domain"/>
    <property type="match status" value="1"/>
</dbReference>
<dbReference type="InterPro" id="IPR002223">
    <property type="entry name" value="Kunitz_BPTI"/>
</dbReference>
<dbReference type="InterPro" id="IPR036880">
    <property type="entry name" value="Kunitz_BPTI_sf"/>
</dbReference>
<dbReference type="InterPro" id="IPR020901">
    <property type="entry name" value="Prtase_inh_Kunz-CS"/>
</dbReference>
<dbReference type="InterPro" id="IPR050098">
    <property type="entry name" value="TFPI/VKTCI-like"/>
</dbReference>
<dbReference type="PANTHER" id="PTHR10083:SF374">
    <property type="entry name" value="BPTI_KUNITZ INHIBITOR DOMAIN-CONTAINING PROTEIN"/>
    <property type="match status" value="1"/>
</dbReference>
<dbReference type="PANTHER" id="PTHR10083">
    <property type="entry name" value="KUNITZ-TYPE PROTEASE INHIBITOR-RELATED"/>
    <property type="match status" value="1"/>
</dbReference>
<dbReference type="Pfam" id="PF00014">
    <property type="entry name" value="Kunitz_BPTI"/>
    <property type="match status" value="1"/>
</dbReference>
<dbReference type="PRINTS" id="PR00759">
    <property type="entry name" value="BASICPTASE"/>
</dbReference>
<dbReference type="SMART" id="SM00131">
    <property type="entry name" value="KU"/>
    <property type="match status" value="1"/>
</dbReference>
<dbReference type="SUPFAM" id="SSF57362">
    <property type="entry name" value="BPTI-like"/>
    <property type="match status" value="1"/>
</dbReference>
<dbReference type="PROSITE" id="PS00280">
    <property type="entry name" value="BPTI_KUNITZ_1"/>
    <property type="match status" value="1"/>
</dbReference>
<dbReference type="PROSITE" id="PS50279">
    <property type="entry name" value="BPTI_KUNITZ_2"/>
    <property type="match status" value="1"/>
</dbReference>